<feature type="chain" id="PRO_0000071741" description="V-type proton ATPase subunit e">
    <location>
        <begin position="1"/>
        <end position="86"/>
    </location>
</feature>
<feature type="transmembrane region" description="Helical" evidence="2">
    <location>
        <begin position="1"/>
        <end position="21"/>
    </location>
</feature>
<feature type="topological domain" description="Cytoplasmic" evidence="5">
    <location>
        <begin position="22"/>
        <end position="32"/>
    </location>
</feature>
<feature type="transmembrane region" description="Helical" evidence="2">
    <location>
        <begin position="33"/>
        <end position="53"/>
    </location>
</feature>
<feature type="topological domain" description="Lumenal" evidence="5">
    <location>
        <begin position="54"/>
        <end position="86"/>
    </location>
</feature>
<feature type="mutagenesis site" description="Causes hyperfusion of epidermal cells in embryos." evidence="3">
    <location>
        <begin position="52"/>
        <end position="86"/>
    </location>
</feature>
<dbReference type="EMBL" id="BX284604">
    <property type="protein sequence ID" value="CAA92517.2"/>
    <property type="molecule type" value="Genomic_DNA"/>
</dbReference>
<dbReference type="PIR" id="T22418">
    <property type="entry name" value="T22418"/>
</dbReference>
<dbReference type="RefSeq" id="NP_501636.2">
    <property type="nucleotide sequence ID" value="NM_069235.10"/>
</dbReference>
<dbReference type="SMR" id="Q20591"/>
<dbReference type="FunCoup" id="Q20591">
    <property type="interactions" value="1431"/>
</dbReference>
<dbReference type="STRING" id="6239.F49C12.13.1"/>
<dbReference type="TCDB" id="3.A.2.2.7">
    <property type="family name" value="the h+- or na+-translocating f-type, v-type and a-type atpase (f-atpase) superfamily"/>
</dbReference>
<dbReference type="PaxDb" id="6239-F49C12.13"/>
<dbReference type="PeptideAtlas" id="Q20591"/>
<dbReference type="EnsemblMetazoa" id="F49C12.13.1">
    <property type="protein sequence ID" value="F49C12.13.1"/>
    <property type="gene ID" value="WBGene00009882"/>
</dbReference>
<dbReference type="GeneID" id="177757"/>
<dbReference type="KEGG" id="cel:CELE_F49C12.13"/>
<dbReference type="UCSC" id="F49C12.13.1">
    <property type="organism name" value="c. elegans"/>
</dbReference>
<dbReference type="AGR" id="WB:WBGene00009882"/>
<dbReference type="CTD" id="177757"/>
<dbReference type="WormBase" id="F49C12.13">
    <property type="protein sequence ID" value="CE37521"/>
    <property type="gene ID" value="WBGene00009882"/>
    <property type="gene designation" value="vha-17"/>
</dbReference>
<dbReference type="eggNOG" id="KOG3500">
    <property type="taxonomic scope" value="Eukaryota"/>
</dbReference>
<dbReference type="GeneTree" id="ENSGT00940000168530"/>
<dbReference type="HOGENOM" id="CLU_170555_0_0_1"/>
<dbReference type="InParanoid" id="Q20591"/>
<dbReference type="OMA" id="CCIMLTA"/>
<dbReference type="OrthoDB" id="1508846at2759"/>
<dbReference type="PhylomeDB" id="Q20591"/>
<dbReference type="Reactome" id="R-CEL-1222556">
    <property type="pathway name" value="ROS and RNS production in phagocytes"/>
</dbReference>
<dbReference type="Reactome" id="R-CEL-77387">
    <property type="pathway name" value="Insulin receptor recycling"/>
</dbReference>
<dbReference type="Reactome" id="R-CEL-917977">
    <property type="pathway name" value="Transferrin endocytosis and recycling"/>
</dbReference>
<dbReference type="Reactome" id="R-CEL-9639288">
    <property type="pathway name" value="Amino acids regulate mTORC1"/>
</dbReference>
<dbReference type="Reactome" id="R-CEL-983712">
    <property type="pathway name" value="Ion channel transport"/>
</dbReference>
<dbReference type="PRO" id="PR:Q20591"/>
<dbReference type="Proteomes" id="UP000001940">
    <property type="component" value="Chromosome IV"/>
</dbReference>
<dbReference type="Bgee" id="WBGene00009882">
    <property type="expression patterns" value="Expressed in larva and 4 other cell types or tissues"/>
</dbReference>
<dbReference type="GO" id="GO:0043296">
    <property type="term" value="C:apical junction complex"/>
    <property type="evidence" value="ECO:0000314"/>
    <property type="project" value="WormBase"/>
</dbReference>
<dbReference type="GO" id="GO:0016324">
    <property type="term" value="C:apical plasma membrane"/>
    <property type="evidence" value="ECO:0000314"/>
    <property type="project" value="WormBase"/>
</dbReference>
<dbReference type="GO" id="GO:0033181">
    <property type="term" value="C:plasma membrane proton-transporting V-type ATPase complex"/>
    <property type="evidence" value="ECO:0000318"/>
    <property type="project" value="GO_Central"/>
</dbReference>
<dbReference type="GO" id="GO:0033179">
    <property type="term" value="C:proton-transporting V-type ATPase, V0 domain"/>
    <property type="evidence" value="ECO:0007669"/>
    <property type="project" value="InterPro"/>
</dbReference>
<dbReference type="GO" id="GO:0046961">
    <property type="term" value="F:proton-transporting ATPase activity, rotational mechanism"/>
    <property type="evidence" value="ECO:0007669"/>
    <property type="project" value="InterPro"/>
</dbReference>
<dbReference type="GO" id="GO:0009792">
    <property type="term" value="P:embryo development ending in birth or egg hatching"/>
    <property type="evidence" value="ECO:0000315"/>
    <property type="project" value="WormBase"/>
</dbReference>
<dbReference type="GO" id="GO:0010172">
    <property type="term" value="P:embryonic body morphogenesis"/>
    <property type="evidence" value="ECO:0000315"/>
    <property type="project" value="WormBase"/>
</dbReference>
<dbReference type="GO" id="GO:0060142">
    <property type="term" value="P:regulation of syncytium formation by plasma membrane fusion"/>
    <property type="evidence" value="ECO:0000315"/>
    <property type="project" value="WormBase"/>
</dbReference>
<dbReference type="GO" id="GO:0055085">
    <property type="term" value="P:transmembrane transport"/>
    <property type="evidence" value="ECO:0000318"/>
    <property type="project" value="GO_Central"/>
</dbReference>
<dbReference type="InterPro" id="IPR008389">
    <property type="entry name" value="ATPase_V0-cplx_e1/e2_su"/>
</dbReference>
<dbReference type="InterPro" id="IPR017385">
    <property type="entry name" value="ATPase_V0-cplx_e1/e2_su_met"/>
</dbReference>
<dbReference type="PANTHER" id="PTHR12263:SF0">
    <property type="entry name" value="V-TYPE PROTON ATPASE SUBUNIT"/>
    <property type="match status" value="1"/>
</dbReference>
<dbReference type="PANTHER" id="PTHR12263">
    <property type="entry name" value="VACUOLAR ATP SYNTHASE SUBUNIT H"/>
    <property type="match status" value="1"/>
</dbReference>
<dbReference type="Pfam" id="PF05493">
    <property type="entry name" value="ATP_synt_H"/>
    <property type="match status" value="1"/>
</dbReference>
<dbReference type="PIRSF" id="PIRSF038097">
    <property type="entry name" value="V-ATP_synth_e1/e2"/>
    <property type="match status" value="1"/>
</dbReference>
<proteinExistence type="evidence at protein level"/>
<protein>
    <recommendedName>
        <fullName>V-type proton ATPase subunit e</fullName>
        <shortName>V-ATPase subunit e</shortName>
    </recommendedName>
    <alternativeName>
        <fullName>Vacuolar proton pump subunit e</fullName>
    </alternativeName>
</protein>
<keyword id="KW-1003">Cell membrane</keyword>
<keyword id="KW-0375">Hydrogen ion transport</keyword>
<keyword id="KW-0406">Ion transport</keyword>
<keyword id="KW-0472">Membrane</keyword>
<keyword id="KW-1185">Reference proteome</keyword>
<keyword id="KW-0812">Transmembrane</keyword>
<keyword id="KW-1133">Transmembrane helix</keyword>
<keyword id="KW-0813">Transport</keyword>
<sequence>MGILIPLVSVSAFWAIIGFGGPWIVPKGPNRGIIQLMIIMTAVCCWMFWIMVFLHQLNPLIGPQINVKTIRWISEKWGDAPNVINN</sequence>
<organism>
    <name type="scientific">Caenorhabditis elegans</name>
    <dbReference type="NCBI Taxonomy" id="6239"/>
    <lineage>
        <taxon>Eukaryota</taxon>
        <taxon>Metazoa</taxon>
        <taxon>Ecdysozoa</taxon>
        <taxon>Nematoda</taxon>
        <taxon>Chromadorea</taxon>
        <taxon>Rhabditida</taxon>
        <taxon>Rhabditina</taxon>
        <taxon>Rhabditomorpha</taxon>
        <taxon>Rhabditoidea</taxon>
        <taxon>Rhabditidae</taxon>
        <taxon>Peloderinae</taxon>
        <taxon>Caenorhabditis</taxon>
    </lineage>
</organism>
<reference key="1">
    <citation type="journal article" date="1998" name="Science">
        <title>Genome sequence of the nematode C. elegans: a platform for investigating biology.</title>
        <authorList>
            <consortium name="The C. elegans sequencing consortium"/>
        </authorList>
    </citation>
    <scope>NUCLEOTIDE SEQUENCE [LARGE SCALE GENOMIC DNA]</scope>
    <source>
        <strain>Bristol N2</strain>
    </source>
</reference>
<reference key="2">
    <citation type="journal article" date="2005" name="Dev. Cell">
        <title>Repression of cell-cell fusion by components of the C. elegans vacuolar ATPase complex.</title>
        <authorList>
            <person name="Kontani K."/>
            <person name="Moskowitz I.P.G."/>
            <person name="Rothman J.H."/>
        </authorList>
    </citation>
    <scope>FUNCTION</scope>
    <scope>SUBCELLULAR LOCATION</scope>
    <scope>DEVELOPMENTAL STAGE</scope>
    <scope>DISRUPTION PHENOTYPE</scope>
    <scope>MUTAGENESIS OF 52-VAL--ASN-86</scope>
</reference>
<evidence type="ECO:0000250" key="1">
    <source>
        <dbReference type="UniProtKB" id="Q2KIB5"/>
    </source>
</evidence>
<evidence type="ECO:0000255" key="2"/>
<evidence type="ECO:0000269" key="3">
    <source>
    </source>
</evidence>
<evidence type="ECO:0000303" key="4">
    <source>
    </source>
</evidence>
<evidence type="ECO:0000305" key="5"/>
<evidence type="ECO:0000312" key="6">
    <source>
        <dbReference type="WormBase" id="F49C12.13"/>
    </source>
</evidence>
<accession>Q20591</accession>
<name>VA0E_CAEEL</name>
<gene>
    <name evidence="6" type="primary">vha-17</name>
    <name evidence="4" type="synonym">fus-1</name>
    <name evidence="6" type="ORF">F49C12.13</name>
</gene>
<comment type="function">
    <text evidence="1 3">Subunit of the V0 complex of vacuolar(H+)-ATPase (V-ATPase), a multisubunit enzyme composed of a peripheral complex (V1) that hydrolyzes ATP and a membrane integral complex (V0) that translocates protons (By similarity). V-ATPase is responsible for acidifying and maintaining the pH of intracellular compartments and in some cell types, is targeted to the plasma membrane, where it is responsible for acidifying the extracellular environment (By similarity). During embryonic development, the V-ATPase is required to repress fusion of epidermal cells probably by negatively regulating eff-1-mediated cell fusion (PubMed:15866168).</text>
</comment>
<comment type="subunit">
    <text evidence="1">V-ATPase is a heteromultimeric enzyme made up of two complexes: the ATP-hydrolytic V1 complex and the proton translocation V0 complex. The V1 complex consists of three catalytic AB heterodimers that form a heterohexamer, three peripheral stalks each consisting of EG heterodimers, one central rotor including subunits D and F, and the regulatory subunits C and H. The proton translocation complex V0 consists of the proton transport subunit a, a ring of proteolipid subunits c9c'', rotary subunit d, subunits e and f, and the accessory subunits vah-19/Ac45 and vah-20/PRR.</text>
</comment>
<comment type="subcellular location">
    <subcellularLocation>
        <location evidence="3">Apical cell membrane</location>
        <topology evidence="2">Multi-pass membrane protein</topology>
    </subcellularLocation>
    <text evidence="3">In late stage embryos, localizes to the apical cell membrane and partially to apical junctions of epidermal cells (PubMed:15866168). In the gut of 1.5-fold embryo, localizes to puctate structures (PubMed:15866168).</text>
</comment>
<comment type="developmental stage">
    <text evidence="3">In the 1.5-fold embryo, expressed in gut cells but not in epidermal cells (at protein level) (PubMed:15866168). In the 3-fold embryo, expressed in dorsal and ventral epidermal cells, but not in seam cells, and in the excretory cell (at protein level) (PubMed:15866168).</text>
</comment>
<comment type="disruption phenotype">
    <text evidence="3">RNAi-mediated knockdown causes hyperfusion of epidermal cells in embryos.</text>
</comment>
<comment type="similarity">
    <text evidence="5">Belongs to the V-ATPase e1/e2 subunit family.</text>
</comment>